<organism>
    <name type="scientific">Streptococcus agalactiae serotype Ia (strain ATCC 27591 / A909 / CDC SS700)</name>
    <dbReference type="NCBI Taxonomy" id="205921"/>
    <lineage>
        <taxon>Bacteria</taxon>
        <taxon>Bacillati</taxon>
        <taxon>Bacillota</taxon>
        <taxon>Bacilli</taxon>
        <taxon>Lactobacillales</taxon>
        <taxon>Streptococcaceae</taxon>
        <taxon>Streptococcus</taxon>
    </lineage>
</organism>
<protein>
    <recommendedName>
        <fullName evidence="1">Gamma-glutamyl phosphate reductase</fullName>
        <shortName evidence="1">GPR</shortName>
        <ecNumber evidence="1">1.2.1.41</ecNumber>
    </recommendedName>
    <alternativeName>
        <fullName evidence="1">Glutamate-5-semialdehyde dehydrogenase</fullName>
    </alternativeName>
    <alternativeName>
        <fullName evidence="1">Glutamyl-gamma-semialdehyde dehydrogenase</fullName>
        <shortName evidence="1">GSA dehydrogenase</shortName>
    </alternativeName>
</protein>
<gene>
    <name evidence="1" type="primary">proA</name>
    <name type="ordered locus">SAK_0356</name>
</gene>
<dbReference type="EC" id="1.2.1.41" evidence="1"/>
<dbReference type="EMBL" id="CP000114">
    <property type="protein sequence ID" value="ABA44846.1"/>
    <property type="molecule type" value="Genomic_DNA"/>
</dbReference>
<dbReference type="RefSeq" id="WP_000221014.1">
    <property type="nucleotide sequence ID" value="NC_007432.1"/>
</dbReference>
<dbReference type="SMR" id="Q3K395"/>
<dbReference type="KEGG" id="sak:SAK_0356"/>
<dbReference type="HOGENOM" id="CLU_030231_0_0_9"/>
<dbReference type="UniPathway" id="UPA00098">
    <property type="reaction ID" value="UER00360"/>
</dbReference>
<dbReference type="GO" id="GO:0005737">
    <property type="term" value="C:cytoplasm"/>
    <property type="evidence" value="ECO:0007669"/>
    <property type="project" value="UniProtKB-SubCell"/>
</dbReference>
<dbReference type="GO" id="GO:0004350">
    <property type="term" value="F:glutamate-5-semialdehyde dehydrogenase activity"/>
    <property type="evidence" value="ECO:0007669"/>
    <property type="project" value="UniProtKB-UniRule"/>
</dbReference>
<dbReference type="GO" id="GO:0050661">
    <property type="term" value="F:NADP binding"/>
    <property type="evidence" value="ECO:0007669"/>
    <property type="project" value="InterPro"/>
</dbReference>
<dbReference type="GO" id="GO:0055129">
    <property type="term" value="P:L-proline biosynthetic process"/>
    <property type="evidence" value="ECO:0007669"/>
    <property type="project" value="UniProtKB-UniRule"/>
</dbReference>
<dbReference type="CDD" id="cd07079">
    <property type="entry name" value="ALDH_F18-19_ProA-GPR"/>
    <property type="match status" value="1"/>
</dbReference>
<dbReference type="FunFam" id="3.40.309.10:FF:000006">
    <property type="entry name" value="Gamma-glutamyl phosphate reductase"/>
    <property type="match status" value="1"/>
</dbReference>
<dbReference type="Gene3D" id="3.40.605.10">
    <property type="entry name" value="Aldehyde Dehydrogenase, Chain A, domain 1"/>
    <property type="match status" value="1"/>
</dbReference>
<dbReference type="Gene3D" id="3.40.309.10">
    <property type="entry name" value="Aldehyde Dehydrogenase, Chain A, domain 2"/>
    <property type="match status" value="1"/>
</dbReference>
<dbReference type="HAMAP" id="MF_00412">
    <property type="entry name" value="ProA"/>
    <property type="match status" value="1"/>
</dbReference>
<dbReference type="InterPro" id="IPR016161">
    <property type="entry name" value="Ald_DH/histidinol_DH"/>
</dbReference>
<dbReference type="InterPro" id="IPR016163">
    <property type="entry name" value="Ald_DH_C"/>
</dbReference>
<dbReference type="InterPro" id="IPR016162">
    <property type="entry name" value="Ald_DH_N"/>
</dbReference>
<dbReference type="InterPro" id="IPR015590">
    <property type="entry name" value="Aldehyde_DH_dom"/>
</dbReference>
<dbReference type="InterPro" id="IPR020593">
    <property type="entry name" value="G-glutamylP_reductase_CS"/>
</dbReference>
<dbReference type="InterPro" id="IPR012134">
    <property type="entry name" value="Glu-5-SA_DH"/>
</dbReference>
<dbReference type="InterPro" id="IPR000965">
    <property type="entry name" value="GPR_dom"/>
</dbReference>
<dbReference type="NCBIfam" id="NF001221">
    <property type="entry name" value="PRK00197.1"/>
    <property type="match status" value="1"/>
</dbReference>
<dbReference type="NCBIfam" id="TIGR00407">
    <property type="entry name" value="proA"/>
    <property type="match status" value="1"/>
</dbReference>
<dbReference type="PANTHER" id="PTHR11063:SF8">
    <property type="entry name" value="DELTA-1-PYRROLINE-5-CARBOXYLATE SYNTHASE"/>
    <property type="match status" value="1"/>
</dbReference>
<dbReference type="PANTHER" id="PTHR11063">
    <property type="entry name" value="GLUTAMATE SEMIALDEHYDE DEHYDROGENASE"/>
    <property type="match status" value="1"/>
</dbReference>
<dbReference type="Pfam" id="PF00171">
    <property type="entry name" value="Aldedh"/>
    <property type="match status" value="2"/>
</dbReference>
<dbReference type="PIRSF" id="PIRSF000151">
    <property type="entry name" value="GPR"/>
    <property type="match status" value="1"/>
</dbReference>
<dbReference type="SUPFAM" id="SSF53720">
    <property type="entry name" value="ALDH-like"/>
    <property type="match status" value="1"/>
</dbReference>
<dbReference type="PROSITE" id="PS01223">
    <property type="entry name" value="PROA"/>
    <property type="match status" value="1"/>
</dbReference>
<sequence>MTYIEILGQNAKKASQSVARLSTASKNEILRDLARNIVADTETILTENARDVVKAKDNGISEIMVDRLRLNKDRIQAIANGIYQVADLADPIGQVVSGYTNLDGLKILKKRVPLGVIAMIFESRPNVSVDAFSLAFKTGNAIILRGGKDAIFSNTALVNCMRQTLQDTGHNPDIVQLVEDTSHVVAEELMQATDYVDVLIPRGGAKLIQTVKEKSKIPVIETGVGNVHIYIDEFADLDMAAKIVINAKTQRPSVCNAAEGLVVHQAIAKGFLSQLEKMLKESNQSVEFRADEEALQLLENAVAASESDYATEFLDYIMSVKVVDSFEQAISWINKYSSHHSEAIITNNISRAEIFQDMVDAAAVYVNASTRFTDGFVFGLGAEIGISTQKLHARGPMGLEALTSTKYYINGTGQVRE</sequence>
<name>PROA_STRA1</name>
<evidence type="ECO:0000255" key="1">
    <source>
        <dbReference type="HAMAP-Rule" id="MF_00412"/>
    </source>
</evidence>
<feature type="chain" id="PRO_0000230025" description="Gamma-glutamyl phosphate reductase">
    <location>
        <begin position="1"/>
        <end position="417"/>
    </location>
</feature>
<reference key="1">
    <citation type="journal article" date="2005" name="Proc. Natl. Acad. Sci. U.S.A.">
        <title>Genome analysis of multiple pathogenic isolates of Streptococcus agalactiae: implications for the microbial 'pan-genome'.</title>
        <authorList>
            <person name="Tettelin H."/>
            <person name="Masignani V."/>
            <person name="Cieslewicz M.J."/>
            <person name="Donati C."/>
            <person name="Medini D."/>
            <person name="Ward N.L."/>
            <person name="Angiuoli S.V."/>
            <person name="Crabtree J."/>
            <person name="Jones A.L."/>
            <person name="Durkin A.S."/>
            <person name="DeBoy R.T."/>
            <person name="Davidsen T.M."/>
            <person name="Mora M."/>
            <person name="Scarselli M."/>
            <person name="Margarit y Ros I."/>
            <person name="Peterson J.D."/>
            <person name="Hauser C.R."/>
            <person name="Sundaram J.P."/>
            <person name="Nelson W.C."/>
            <person name="Madupu R."/>
            <person name="Brinkac L.M."/>
            <person name="Dodson R.J."/>
            <person name="Rosovitz M.J."/>
            <person name="Sullivan S.A."/>
            <person name="Daugherty S.C."/>
            <person name="Haft D.H."/>
            <person name="Selengut J."/>
            <person name="Gwinn M.L."/>
            <person name="Zhou L."/>
            <person name="Zafar N."/>
            <person name="Khouri H."/>
            <person name="Radune D."/>
            <person name="Dimitrov G."/>
            <person name="Watkins K."/>
            <person name="O'Connor K.J."/>
            <person name="Smith S."/>
            <person name="Utterback T.R."/>
            <person name="White O."/>
            <person name="Rubens C.E."/>
            <person name="Grandi G."/>
            <person name="Madoff L.C."/>
            <person name="Kasper D.L."/>
            <person name="Telford J.L."/>
            <person name="Wessels M.R."/>
            <person name="Rappuoli R."/>
            <person name="Fraser C.M."/>
        </authorList>
    </citation>
    <scope>NUCLEOTIDE SEQUENCE [LARGE SCALE GENOMIC DNA]</scope>
    <source>
        <strain>ATCC 27591 / A909 / CDC SS700</strain>
    </source>
</reference>
<accession>Q3K395</accession>
<proteinExistence type="inferred from homology"/>
<comment type="function">
    <text evidence="1">Catalyzes the NADPH-dependent reduction of L-glutamate 5-phosphate into L-glutamate 5-semialdehyde and phosphate. The product spontaneously undergoes cyclization to form 1-pyrroline-5-carboxylate.</text>
</comment>
<comment type="catalytic activity">
    <reaction evidence="1">
        <text>L-glutamate 5-semialdehyde + phosphate + NADP(+) = L-glutamyl 5-phosphate + NADPH + H(+)</text>
        <dbReference type="Rhea" id="RHEA:19541"/>
        <dbReference type="ChEBI" id="CHEBI:15378"/>
        <dbReference type="ChEBI" id="CHEBI:43474"/>
        <dbReference type="ChEBI" id="CHEBI:57783"/>
        <dbReference type="ChEBI" id="CHEBI:58066"/>
        <dbReference type="ChEBI" id="CHEBI:58274"/>
        <dbReference type="ChEBI" id="CHEBI:58349"/>
        <dbReference type="EC" id="1.2.1.41"/>
    </reaction>
</comment>
<comment type="pathway">
    <text evidence="1">Amino-acid biosynthesis; L-proline biosynthesis; L-glutamate 5-semialdehyde from L-glutamate: step 2/2.</text>
</comment>
<comment type="subcellular location">
    <subcellularLocation>
        <location evidence="1">Cytoplasm</location>
    </subcellularLocation>
</comment>
<comment type="similarity">
    <text evidence="1">Belongs to the gamma-glutamyl phosphate reductase family.</text>
</comment>
<keyword id="KW-0028">Amino-acid biosynthesis</keyword>
<keyword id="KW-0963">Cytoplasm</keyword>
<keyword id="KW-0521">NADP</keyword>
<keyword id="KW-0560">Oxidoreductase</keyword>
<keyword id="KW-0641">Proline biosynthesis</keyword>